<proteinExistence type="inferred from homology"/>
<keyword id="KW-0997">Cell inner membrane</keyword>
<keyword id="KW-1003">Cell membrane</keyword>
<keyword id="KW-0472">Membrane</keyword>
<keyword id="KW-0614">Plasmid</keyword>
<keyword id="KW-1185">Reference proteome</keyword>
<keyword id="KW-0812">Transmembrane</keyword>
<keyword id="KW-1133">Transmembrane helix</keyword>
<feature type="chain" id="PRO_0000200915" description="Uncharacterized protein y4mL">
    <location>
        <begin position="1"/>
        <end position="419"/>
    </location>
</feature>
<feature type="transmembrane region" description="Helical" evidence="1">
    <location>
        <begin position="5"/>
        <end position="25"/>
    </location>
</feature>
<feature type="transmembrane region" description="Helical" evidence="1">
    <location>
        <begin position="26"/>
        <end position="46"/>
    </location>
</feature>
<feature type="transmembrane region" description="Helical" evidence="1">
    <location>
        <begin position="53"/>
        <end position="73"/>
    </location>
</feature>
<feature type="transmembrane region" description="Helical" evidence="1">
    <location>
        <begin position="102"/>
        <end position="122"/>
    </location>
</feature>
<feature type="transmembrane region" description="Helical" evidence="1">
    <location>
        <begin position="144"/>
        <end position="164"/>
    </location>
</feature>
<feature type="transmembrane region" description="Helical" evidence="1">
    <location>
        <begin position="170"/>
        <end position="190"/>
    </location>
</feature>
<feature type="transmembrane region" description="Helical" evidence="1">
    <location>
        <begin position="210"/>
        <end position="230"/>
    </location>
</feature>
<feature type="transmembrane region" description="Helical" evidence="1">
    <location>
        <begin position="234"/>
        <end position="254"/>
    </location>
</feature>
<feature type="transmembrane region" description="Helical" evidence="1">
    <location>
        <begin position="274"/>
        <end position="294"/>
    </location>
</feature>
<feature type="transmembrane region" description="Helical" evidence="1">
    <location>
        <begin position="309"/>
        <end position="329"/>
    </location>
</feature>
<feature type="transmembrane region" description="Helical" evidence="1">
    <location>
        <begin position="332"/>
        <end position="352"/>
    </location>
</feature>
<feature type="transmembrane region" description="Helical" evidence="1">
    <location>
        <begin position="360"/>
        <end position="380"/>
    </location>
</feature>
<feature type="transmembrane region" description="Helical" evidence="1">
    <location>
        <begin position="396"/>
        <end position="416"/>
    </location>
</feature>
<comment type="subcellular location">
    <subcellularLocation>
        <location evidence="2">Cell inner membrane</location>
        <topology evidence="2">Multi-pass membrane protein</topology>
    </subcellularLocation>
</comment>
<comment type="similarity">
    <text evidence="2">Belongs to the YiaN/YgiK family.</text>
</comment>
<gene>
    <name type="ordered locus">NGR_a02470</name>
    <name type="ORF">y4mL</name>
</gene>
<evidence type="ECO:0000255" key="1"/>
<evidence type="ECO:0000305" key="2"/>
<sequence>MTIVMIIVFCALMMLAVPVGYALIIAAGVAVLFNGYLPLSIVAQQIYDQTQSFPMLALPFFMLAGTLMLGGELGRQLLELASHAMQRWRGGPLSTTVVSSVVFGGVSGSAVANASALGSVLIPWQKKHGFPPALCAANNATSAVIDVLIPPSIPMILFSLVSGVSVANLFVAGILPGILMAASFVFVCWFVSVRRGYASQPSQTSRRQLATLALKSLPAVLLPVLIILFLRFGLATPTEVAVLSVVYSLALSLLYYRDLTWKRFCDNVVEAGMATGVVMLVIMGSAAVGWVLTFDQAPQQMADWVAANISSPIVIILMMNILMLIVGMPLDMPPAILLLGPIFVPLADTIGLDRVQLGLMMVINLGIGLYTPPIGTTLFISSSIAKSPLGETTRELWPFFAMAMTLLLAVSFIPALTLY</sequence>
<accession>P55571</accession>
<protein>
    <recommendedName>
        <fullName>Uncharacterized protein y4mL</fullName>
    </recommendedName>
</protein>
<reference key="1">
    <citation type="journal article" date="1997" name="Nature">
        <title>Molecular basis of symbiosis between Rhizobium and legumes.</title>
        <authorList>
            <person name="Freiberg C.A."/>
            <person name="Fellay R."/>
            <person name="Bairoch A."/>
            <person name="Broughton W.J."/>
            <person name="Rosenthal A."/>
            <person name="Perret X."/>
        </authorList>
    </citation>
    <scope>NUCLEOTIDE SEQUENCE [LARGE SCALE GENOMIC DNA]</scope>
    <source>
        <strain>NBRC 101917 / NGR234</strain>
    </source>
</reference>
<reference key="2">
    <citation type="journal article" date="2009" name="Appl. Environ. Microbiol.">
        <title>Rhizobium sp. strain NGR234 possesses a remarkable number of secretion systems.</title>
        <authorList>
            <person name="Schmeisser C."/>
            <person name="Liesegang H."/>
            <person name="Krysciak D."/>
            <person name="Bakkou N."/>
            <person name="Le Quere A."/>
            <person name="Wollherr A."/>
            <person name="Heinemeyer I."/>
            <person name="Morgenstern B."/>
            <person name="Pommerening-Roeser A."/>
            <person name="Flores M."/>
            <person name="Palacios R."/>
            <person name="Brenner S."/>
            <person name="Gottschalk G."/>
            <person name="Schmitz R.A."/>
            <person name="Broughton W.J."/>
            <person name="Perret X."/>
            <person name="Strittmatter A.W."/>
            <person name="Streit W.R."/>
        </authorList>
    </citation>
    <scope>NUCLEOTIDE SEQUENCE [LARGE SCALE GENOMIC DNA]</scope>
    <source>
        <strain>NBRC 101917 / NGR234</strain>
    </source>
</reference>
<geneLocation type="plasmid">
    <name>sym pNGR234a</name>
</geneLocation>
<dbReference type="EMBL" id="U00090">
    <property type="protein sequence ID" value="AAB91775.1"/>
    <property type="molecule type" value="Genomic_DNA"/>
</dbReference>
<dbReference type="RefSeq" id="NP_443978.1">
    <property type="nucleotide sequence ID" value="NC_000914.2"/>
</dbReference>
<dbReference type="RefSeq" id="WP_010875272.1">
    <property type="nucleotide sequence ID" value="NC_000914.2"/>
</dbReference>
<dbReference type="SMR" id="P55571"/>
<dbReference type="KEGG" id="rhi:NGR_a02470"/>
<dbReference type="PATRIC" id="fig|394.7.peg.257"/>
<dbReference type="eggNOG" id="COG1593">
    <property type="taxonomic scope" value="Bacteria"/>
</dbReference>
<dbReference type="HOGENOM" id="CLU_019824_4_1_5"/>
<dbReference type="OrthoDB" id="7374726at2"/>
<dbReference type="Proteomes" id="UP000001054">
    <property type="component" value="Plasmid pNGR234a"/>
</dbReference>
<dbReference type="GO" id="GO:0005886">
    <property type="term" value="C:plasma membrane"/>
    <property type="evidence" value="ECO:0007669"/>
    <property type="project" value="UniProtKB-SubCell"/>
</dbReference>
<dbReference type="GO" id="GO:0022857">
    <property type="term" value="F:transmembrane transporter activity"/>
    <property type="evidence" value="ECO:0007669"/>
    <property type="project" value="TreeGrafter"/>
</dbReference>
<dbReference type="InterPro" id="IPR010656">
    <property type="entry name" value="DctM"/>
</dbReference>
<dbReference type="InterPro" id="IPR004681">
    <property type="entry name" value="TRAP_DctM"/>
</dbReference>
<dbReference type="NCBIfam" id="TIGR00786">
    <property type="entry name" value="dctM"/>
    <property type="match status" value="1"/>
</dbReference>
<dbReference type="PANTHER" id="PTHR33362">
    <property type="entry name" value="SIALIC ACID TRAP TRANSPORTER PERMEASE PROTEIN SIAT-RELATED"/>
    <property type="match status" value="1"/>
</dbReference>
<dbReference type="PANTHER" id="PTHR33362:SF2">
    <property type="entry name" value="TRAP TRANSPORTER LARGE PERMEASE PROTEIN"/>
    <property type="match status" value="1"/>
</dbReference>
<dbReference type="Pfam" id="PF06808">
    <property type="entry name" value="DctM"/>
    <property type="match status" value="1"/>
</dbReference>
<dbReference type="PIRSF" id="PIRSF006066">
    <property type="entry name" value="HI0050"/>
    <property type="match status" value="1"/>
</dbReference>
<name>Y4ML_SINFN</name>
<organism>
    <name type="scientific">Sinorhizobium fredii (strain NBRC 101917 / NGR234)</name>
    <dbReference type="NCBI Taxonomy" id="394"/>
    <lineage>
        <taxon>Bacteria</taxon>
        <taxon>Pseudomonadati</taxon>
        <taxon>Pseudomonadota</taxon>
        <taxon>Alphaproteobacteria</taxon>
        <taxon>Hyphomicrobiales</taxon>
        <taxon>Rhizobiaceae</taxon>
        <taxon>Sinorhizobium/Ensifer group</taxon>
        <taxon>Sinorhizobium</taxon>
    </lineage>
</organism>